<feature type="signal peptide" evidence="1">
    <location>
        <begin position="1"/>
        <end position="14"/>
    </location>
</feature>
<feature type="chain" id="PRO_0000087141" description="Type 3 secretion system pilotin" evidence="1">
    <location>
        <begin position="15"/>
        <end position="137"/>
    </location>
</feature>
<feature type="sequence conflict" description="In Ref. 1; AAA25815." evidence="6" ref="1">
    <original>R</original>
    <variation>W</variation>
    <location>
        <position position="62"/>
    </location>
</feature>
<feature type="strand" evidence="9">
    <location>
        <begin position="22"/>
        <end position="32"/>
    </location>
</feature>
<feature type="strand" evidence="9">
    <location>
        <begin position="39"/>
        <end position="49"/>
    </location>
</feature>
<feature type="strand" evidence="9">
    <location>
        <begin position="52"/>
        <end position="66"/>
    </location>
</feature>
<feature type="strand" evidence="9">
    <location>
        <begin position="68"/>
        <end position="75"/>
    </location>
</feature>
<feature type="helix" evidence="9">
    <location>
        <begin position="76"/>
        <end position="79"/>
    </location>
</feature>
<feature type="strand" evidence="9">
    <location>
        <begin position="84"/>
        <end position="92"/>
    </location>
</feature>
<feature type="strand" evidence="9">
    <location>
        <begin position="100"/>
        <end position="106"/>
    </location>
</feature>
<feature type="strand" evidence="9">
    <location>
        <begin position="110"/>
        <end position="115"/>
    </location>
</feature>
<feature type="turn" evidence="9">
    <location>
        <begin position="120"/>
        <end position="123"/>
    </location>
</feature>
<sequence length="137" mass="14996">MLLPLALLLGGCVSQPAPMSPKVTVGGSVGGVSLQARQAQLRLRLYAVVQGRMQTIAERRYRVSGLPLRYAFDLEVDRLEGEALYLRTELSWVGVAAVQASAWQQVAAGVDERVRLVRRDCFPNCTAARPEERSGND</sequence>
<proteinExistence type="evidence at protein level"/>
<dbReference type="EMBL" id="M64975">
    <property type="protein sequence ID" value="AAA25815.1"/>
    <property type="molecule type" value="Genomic_DNA"/>
</dbReference>
<dbReference type="EMBL" id="AE004091">
    <property type="protein sequence ID" value="AAG05101.1"/>
    <property type="molecule type" value="Genomic_DNA"/>
</dbReference>
<dbReference type="PIR" id="B41047">
    <property type="entry name" value="B41047"/>
</dbReference>
<dbReference type="PIR" id="E83433">
    <property type="entry name" value="E83433"/>
</dbReference>
<dbReference type="RefSeq" id="NP_250403.1">
    <property type="nucleotide sequence ID" value="NC_002516.2"/>
</dbReference>
<dbReference type="RefSeq" id="WP_003100765.1">
    <property type="nucleotide sequence ID" value="NZ_QZGE01000003.1"/>
</dbReference>
<dbReference type="PDB" id="2YJL">
    <property type="method" value="X-ray"/>
    <property type="resolution" value="1.81 A"/>
    <property type="chains" value="A/B/C=13-137"/>
</dbReference>
<dbReference type="PDBsum" id="2YJL"/>
<dbReference type="SMR" id="P26994"/>
<dbReference type="STRING" id="208964.PA1712"/>
<dbReference type="PaxDb" id="208964-PA1712"/>
<dbReference type="DNASU" id="878557"/>
<dbReference type="GeneID" id="878557"/>
<dbReference type="KEGG" id="pae:PA1712"/>
<dbReference type="PATRIC" id="fig|208964.12.peg.1774"/>
<dbReference type="PseudoCAP" id="PA1712"/>
<dbReference type="HOGENOM" id="CLU_1833466_0_0_6"/>
<dbReference type="InParanoid" id="P26994"/>
<dbReference type="BioCyc" id="PAER208964:G1FZ6-1743-MONOMER"/>
<dbReference type="Proteomes" id="UP000002438">
    <property type="component" value="Chromosome"/>
</dbReference>
<dbReference type="GO" id="GO:0009279">
    <property type="term" value="C:cell outer membrane"/>
    <property type="evidence" value="ECO:0007669"/>
    <property type="project" value="UniProtKB-SubCell"/>
</dbReference>
<dbReference type="Gene3D" id="2.60.40.2990">
    <property type="match status" value="1"/>
</dbReference>
<dbReference type="InterPro" id="IPR039366">
    <property type="entry name" value="Pilotin"/>
</dbReference>
<dbReference type="InterPro" id="IPR053740">
    <property type="entry name" value="T3SS_Pilotin"/>
</dbReference>
<dbReference type="NCBIfam" id="TIGR02567">
    <property type="entry name" value="YscW"/>
    <property type="match status" value="1"/>
</dbReference>
<dbReference type="Pfam" id="PF09619">
    <property type="entry name" value="YscW"/>
    <property type="match status" value="1"/>
</dbReference>
<protein>
    <recommendedName>
        <fullName evidence="6">Type 3 secretion system pilotin</fullName>
    </recommendedName>
    <alternativeName>
        <fullName>Exoenzyme S synthesis protein B</fullName>
    </alternativeName>
    <alternativeName>
        <fullName evidence="5">Pilotin</fullName>
    </alternativeName>
</protein>
<organism>
    <name type="scientific">Pseudomonas aeruginosa (strain ATCC 15692 / DSM 22644 / CIP 104116 / JCM 14847 / LMG 12228 / 1C / PRS 101 / PAO1)</name>
    <dbReference type="NCBI Taxonomy" id="208964"/>
    <lineage>
        <taxon>Bacteria</taxon>
        <taxon>Pseudomonadati</taxon>
        <taxon>Pseudomonadota</taxon>
        <taxon>Gammaproteobacteria</taxon>
        <taxon>Pseudomonadales</taxon>
        <taxon>Pseudomonadaceae</taxon>
        <taxon>Pseudomonas</taxon>
    </lineage>
</organism>
<name>EXSB_PSEAE</name>
<reference key="1">
    <citation type="journal article" date="1991" name="J. Bacteriol.">
        <title>Cloning and sequence analysis of a trans-regulatory locus required for exoenzyme S synthesis in Pseudomonas aeruginosa.</title>
        <authorList>
            <person name="Frank D.W."/>
            <person name="Iglewski B.H."/>
        </authorList>
    </citation>
    <scope>NUCLEOTIDE SEQUENCE [GENOMIC DNA]</scope>
    <source>
        <strain>ATCC 15692 / DSM 22644 / CIP 104116 / JCM 14847 / LMG 12228 / 1C / PRS 101 / PAO1</strain>
    </source>
</reference>
<reference key="2">
    <citation type="journal article" date="2000" name="Nature">
        <title>Complete genome sequence of Pseudomonas aeruginosa PAO1, an opportunistic pathogen.</title>
        <authorList>
            <person name="Stover C.K."/>
            <person name="Pham X.-Q.T."/>
            <person name="Erwin A.L."/>
            <person name="Mizoguchi S.D."/>
            <person name="Warrener P."/>
            <person name="Hickey M.J."/>
            <person name="Brinkman F.S.L."/>
            <person name="Hufnagle W.O."/>
            <person name="Kowalik D.J."/>
            <person name="Lagrou M."/>
            <person name="Garber R.L."/>
            <person name="Goltry L."/>
            <person name="Tolentino E."/>
            <person name="Westbrock-Wadman S."/>
            <person name="Yuan Y."/>
            <person name="Brody L.L."/>
            <person name="Coulter S.N."/>
            <person name="Folger K.R."/>
            <person name="Kas A."/>
            <person name="Larbig K."/>
            <person name="Lim R.M."/>
            <person name="Smith K.A."/>
            <person name="Spencer D.H."/>
            <person name="Wong G.K.-S."/>
            <person name="Wu Z."/>
            <person name="Paulsen I.T."/>
            <person name="Reizer J."/>
            <person name="Saier M.H. Jr."/>
            <person name="Hancock R.E.W."/>
            <person name="Lory S."/>
            <person name="Olson M.V."/>
        </authorList>
    </citation>
    <scope>NUCLEOTIDE SEQUENCE [LARGE SCALE GENOMIC DNA]</scope>
    <source>
        <strain>ATCC 15692 / DSM 22644 / CIP 104116 / JCM 14847 / LMG 12228 / 1C / PRS 101 / PAO1</strain>
    </source>
</reference>
<reference key="3">
    <citation type="journal article" date="2015" name="Infect. Immun.">
        <title>ExsB is required for correct assembly of the Pseudomonas aeruginosa type III secretion apparatus in the bacterial membrane and full virulence in vivo.</title>
        <authorList>
            <person name="Perdu C."/>
            <person name="Huber P."/>
            <person name="Bouillot S."/>
            <person name="Blocker A."/>
            <person name="Elsen S."/>
            <person name="Attree I."/>
            <person name="Faudry E."/>
        </authorList>
    </citation>
    <scope>FUNCTION</scope>
    <scope>DISRUPTION PHENOTYPE</scope>
</reference>
<reference evidence="8" key="4">
    <citation type="journal article" date="2011" name="J. Mol. Biol.">
        <title>Structural characterization and membrane localization of ExsB from the type III secretion system (T3SS) of Pseudomonas aeruginosa.</title>
        <authorList>
            <person name="Izore T."/>
            <person name="Perdu C."/>
            <person name="Job V."/>
            <person name="Attree I."/>
            <person name="Faudry E."/>
            <person name="Dessen A."/>
        </authorList>
    </citation>
    <scope>X-RAY CRYSTALLOGRAPHY (1.81 ANGSTROMS) OF 13-137</scope>
    <scope>SUBCELLULAR LOCATION</scope>
    <scope>DOMAIN</scope>
</reference>
<comment type="function">
    <text evidence="3">Involved in the synthesis of the type III secretion system (T3SS), also called injectisome, which is used to inject bacterial effector proteins into eukaryotic host cells (PubMed:25690097). Pilot protein that is required for the proper localization of the secretin PscC in the outer membrane (PubMed:25690097). Necessary for full in vivo virulence (PubMed:25690097).</text>
</comment>
<comment type="subcellular location">
    <subcellularLocation>
        <location evidence="2">Cell outer membrane</location>
    </subcellularLocation>
    <text evidence="7">Could be a lipoprotein.</text>
</comment>
<comment type="domain">
    <text evidence="2">Displays a compact beta-sandwich fold with interdependent beta-sheets. Possesses a large patch of basic residues that could play a role in membrane recognition.</text>
</comment>
<comment type="disruption phenotype">
    <text evidence="3">Deletion of the gene causes a diminution of T3SS needles, a decrease in secretion of T3SS proteins and affects the regulatory gene operon. It reduces T3SS activity toward eukaryotic cells. Mutant shows reduced virulence in a mouse pneumonia model.</text>
</comment>
<comment type="similarity">
    <text evidence="6">Belongs to the ExsB/YscW family.</text>
</comment>
<accession>P26994</accession>
<evidence type="ECO:0000255" key="1"/>
<evidence type="ECO:0000269" key="2">
    <source>
    </source>
</evidence>
<evidence type="ECO:0000269" key="3">
    <source>
    </source>
</evidence>
<evidence type="ECO:0000303" key="4">
    <source>
    </source>
</evidence>
<evidence type="ECO:0000303" key="5">
    <source>
    </source>
</evidence>
<evidence type="ECO:0000305" key="6"/>
<evidence type="ECO:0000305" key="7">
    <source>
    </source>
</evidence>
<evidence type="ECO:0007744" key="8">
    <source>
        <dbReference type="PDB" id="2YJL"/>
    </source>
</evidence>
<evidence type="ECO:0007829" key="9">
    <source>
        <dbReference type="PDB" id="2YJL"/>
    </source>
</evidence>
<keyword id="KW-0002">3D-structure</keyword>
<keyword id="KW-0998">Cell outer membrane</keyword>
<keyword id="KW-0472">Membrane</keyword>
<keyword id="KW-1185">Reference proteome</keyword>
<keyword id="KW-0732">Signal</keyword>
<keyword id="KW-0843">Virulence</keyword>
<gene>
    <name evidence="4" type="primary">exsB</name>
    <name type="ordered locus">PA1712</name>
</gene>